<comment type="function">
    <text evidence="1">Involved in pre-mRNA splicing as component of the spliceosome. Involved in transcription-coupled repair (TCR), transcription and pre-mRNA splicing.</text>
</comment>
<comment type="subunit">
    <text evidence="1">Associates with RNA polymerase II, the TCR-specific proteins CKN1/CSA and ERCC6/CSB, and XPA. Identified in the spliceosome C complex. Component of the XAB2 complex, a multimeric protein complex composed of XAB2, PRPF19, AQR, ZNF830, ISY1, and PPIE. Identified in a pentameric intron-binding (IB) complex composed of AQR, XAB2, ISY1, ZNF830 and PPIE that is incorporated into the spliceosome as a preassembled complex. The IB complex does not contain PRPF19.</text>
</comment>
<comment type="subcellular location">
    <subcellularLocation>
        <location evidence="3">Nucleus</location>
    </subcellularLocation>
    <text evidence="3">Detected in the splicing complex carrying pre-mRNA.</text>
</comment>
<comment type="similarity">
    <text evidence="5">Belongs to the crooked-neck family.</text>
</comment>
<organism evidence="6">
    <name type="scientific">Rattus norvegicus</name>
    <name type="common">Rat</name>
    <dbReference type="NCBI Taxonomy" id="10116"/>
    <lineage>
        <taxon>Eukaryota</taxon>
        <taxon>Metazoa</taxon>
        <taxon>Chordata</taxon>
        <taxon>Craniata</taxon>
        <taxon>Vertebrata</taxon>
        <taxon>Euteleostomi</taxon>
        <taxon>Mammalia</taxon>
        <taxon>Eutheria</taxon>
        <taxon>Euarchontoglires</taxon>
        <taxon>Glires</taxon>
        <taxon>Rodentia</taxon>
        <taxon>Myomorpha</taxon>
        <taxon>Muroidea</taxon>
        <taxon>Muridae</taxon>
        <taxon>Murinae</taxon>
        <taxon>Rattus</taxon>
    </lineage>
</organism>
<evidence type="ECO:0000250" key="1">
    <source>
        <dbReference type="UniProtKB" id="Q9HCS7"/>
    </source>
</evidence>
<evidence type="ECO:0000256" key="2">
    <source>
        <dbReference type="SAM" id="MobiDB-lite"/>
    </source>
</evidence>
<evidence type="ECO:0000269" key="3">
    <source>
    </source>
</evidence>
<evidence type="ECO:0000303" key="4">
    <source>
    </source>
</evidence>
<evidence type="ECO:0000305" key="5"/>
<evidence type="ECO:0000312" key="6">
    <source>
        <dbReference type="EMBL" id="AAG53885.1"/>
    </source>
</evidence>
<gene>
    <name type="primary">Xab2</name>
    <name evidence="4" type="synonym">Ath55</name>
    <name type="synonym">Syf1</name>
</gene>
<accession>Q99PK0</accession>
<keyword id="KW-0007">Acetylation</keyword>
<keyword id="KW-0227">DNA damage</keyword>
<keyword id="KW-0234">DNA repair</keyword>
<keyword id="KW-0507">mRNA processing</keyword>
<keyword id="KW-0508">mRNA splicing</keyword>
<keyword id="KW-0539">Nucleus</keyword>
<keyword id="KW-0597">Phosphoprotein</keyword>
<keyword id="KW-1185">Reference proteome</keyword>
<keyword id="KW-0677">Repeat</keyword>
<keyword id="KW-0747">Spliceosome</keyword>
<keyword id="KW-0804">Transcription</keyword>
<name>SYF1_RAT</name>
<dbReference type="EMBL" id="AF277899">
    <property type="protein sequence ID" value="AAG53885.1"/>
    <property type="molecule type" value="mRNA"/>
</dbReference>
<dbReference type="EMBL" id="BC081723">
    <property type="protein sequence ID" value="AAH81723.1"/>
    <property type="molecule type" value="mRNA"/>
</dbReference>
<dbReference type="RefSeq" id="NP_620809.1">
    <property type="nucleotide sequence ID" value="NM_139109.2"/>
</dbReference>
<dbReference type="SMR" id="Q99PK0"/>
<dbReference type="FunCoup" id="Q99PK0">
    <property type="interactions" value="3665"/>
</dbReference>
<dbReference type="IntAct" id="Q99PK0">
    <property type="interactions" value="1"/>
</dbReference>
<dbReference type="STRING" id="10116.ENSRNOP00000001309"/>
<dbReference type="iPTMnet" id="Q99PK0"/>
<dbReference type="PhosphoSitePlus" id="Q99PK0"/>
<dbReference type="jPOST" id="Q99PK0"/>
<dbReference type="PaxDb" id="10116-ENSRNOP00000001309"/>
<dbReference type="GeneID" id="245976"/>
<dbReference type="KEGG" id="rno:245976"/>
<dbReference type="UCSC" id="RGD:621217">
    <property type="organism name" value="rat"/>
</dbReference>
<dbReference type="AGR" id="RGD:621217"/>
<dbReference type="CTD" id="56949"/>
<dbReference type="RGD" id="621217">
    <property type="gene designation" value="Xab2"/>
</dbReference>
<dbReference type="VEuPathDB" id="HostDB:ENSRNOG00000000988"/>
<dbReference type="eggNOG" id="KOG2047">
    <property type="taxonomic scope" value="Eukaryota"/>
</dbReference>
<dbReference type="HOGENOM" id="CLU_007736_2_1_1"/>
<dbReference type="InParanoid" id="Q99PK0"/>
<dbReference type="OrthoDB" id="10067343at2759"/>
<dbReference type="PhylomeDB" id="Q99PK0"/>
<dbReference type="TreeFam" id="TF300866"/>
<dbReference type="Reactome" id="R-RNO-6781823">
    <property type="pathway name" value="Formation of TC-NER Pre-Incision Complex"/>
</dbReference>
<dbReference type="Reactome" id="R-RNO-6782135">
    <property type="pathway name" value="Dual incision in TC-NER"/>
</dbReference>
<dbReference type="Reactome" id="R-RNO-6782210">
    <property type="pathway name" value="Gap-filling DNA repair synthesis and ligation in TC-NER"/>
</dbReference>
<dbReference type="Reactome" id="R-RNO-72163">
    <property type="pathway name" value="mRNA Splicing - Major Pathway"/>
</dbReference>
<dbReference type="PRO" id="PR:Q99PK0"/>
<dbReference type="Proteomes" id="UP000002494">
    <property type="component" value="Chromosome 12"/>
</dbReference>
<dbReference type="Bgee" id="ENSRNOG00000000988">
    <property type="expression patterns" value="Expressed in thymus and 20 other cell types or tissues"/>
</dbReference>
<dbReference type="GO" id="GO:0071013">
    <property type="term" value="C:catalytic step 2 spliceosome"/>
    <property type="evidence" value="ECO:0000266"/>
    <property type="project" value="RGD"/>
</dbReference>
<dbReference type="GO" id="GO:0005654">
    <property type="term" value="C:nucleoplasm"/>
    <property type="evidence" value="ECO:0007669"/>
    <property type="project" value="Ensembl"/>
</dbReference>
<dbReference type="GO" id="GO:0005634">
    <property type="term" value="C:nucleus"/>
    <property type="evidence" value="ECO:0000250"/>
    <property type="project" value="UniProtKB"/>
</dbReference>
<dbReference type="GO" id="GO:0071014">
    <property type="term" value="C:post-mRNA release spliceosomal complex"/>
    <property type="evidence" value="ECO:0000318"/>
    <property type="project" value="GO_Central"/>
</dbReference>
<dbReference type="GO" id="GO:0000974">
    <property type="term" value="C:Prp19 complex"/>
    <property type="evidence" value="ECO:0000318"/>
    <property type="project" value="GO_Central"/>
</dbReference>
<dbReference type="GO" id="GO:0071007">
    <property type="term" value="C:U2-type catalytic step 2 spliceosome"/>
    <property type="evidence" value="ECO:0000250"/>
    <property type="project" value="UniProtKB"/>
</dbReference>
<dbReference type="GO" id="GO:0001824">
    <property type="term" value="P:blastocyst development"/>
    <property type="evidence" value="ECO:0000266"/>
    <property type="project" value="RGD"/>
</dbReference>
<dbReference type="GO" id="GO:0021987">
    <property type="term" value="P:cerebral cortex development"/>
    <property type="evidence" value="ECO:0000270"/>
    <property type="project" value="RGD"/>
</dbReference>
<dbReference type="GO" id="GO:0006351">
    <property type="term" value="P:DNA-templated transcription"/>
    <property type="evidence" value="ECO:0000250"/>
    <property type="project" value="UniProtKB"/>
</dbReference>
<dbReference type="GO" id="GO:0000349">
    <property type="term" value="P:generation of catalytic spliceosome for first transesterification step"/>
    <property type="evidence" value="ECO:0000318"/>
    <property type="project" value="GO_Central"/>
</dbReference>
<dbReference type="GO" id="GO:0000398">
    <property type="term" value="P:mRNA splicing, via spliceosome"/>
    <property type="evidence" value="ECO:0000250"/>
    <property type="project" value="UniProtKB"/>
</dbReference>
<dbReference type="GO" id="GO:0006283">
    <property type="term" value="P:transcription-coupled nucleotide-excision repair"/>
    <property type="evidence" value="ECO:0000250"/>
    <property type="project" value="UniProtKB"/>
</dbReference>
<dbReference type="FunFam" id="1.25.40.10:FF:000023">
    <property type="entry name" value="Pre-mRNA-splicing factor SYF1"/>
    <property type="match status" value="1"/>
</dbReference>
<dbReference type="FunFam" id="1.25.40.10:FF:000137">
    <property type="entry name" value="Pre-mRNA-splicing factor syf1"/>
    <property type="match status" value="1"/>
</dbReference>
<dbReference type="FunFam" id="1.25.40.10:FF:000411">
    <property type="entry name" value="pre-mRNA-splicing factor SYF1"/>
    <property type="match status" value="1"/>
</dbReference>
<dbReference type="FunFam" id="1.25.40.10:FF:000519">
    <property type="entry name" value="pre-mRNA-splicing factor SYF1"/>
    <property type="match status" value="1"/>
</dbReference>
<dbReference type="FunFam" id="1.25.40.10:FF:001071">
    <property type="entry name" value="pre-mRNA-splicing factor SYF1-like"/>
    <property type="match status" value="1"/>
</dbReference>
<dbReference type="Gene3D" id="1.25.40.10">
    <property type="entry name" value="Tetratricopeptide repeat domain"/>
    <property type="match status" value="5"/>
</dbReference>
<dbReference type="InterPro" id="IPR003107">
    <property type="entry name" value="HAT"/>
</dbReference>
<dbReference type="InterPro" id="IPR055433">
    <property type="entry name" value="HAT_Syf1-like_N"/>
</dbReference>
<dbReference type="InterPro" id="IPR056350">
    <property type="entry name" value="HAT_Syf1_central"/>
</dbReference>
<dbReference type="InterPro" id="IPR055430">
    <property type="entry name" value="HAT_Syf1_CNRKL1_C"/>
</dbReference>
<dbReference type="InterPro" id="IPR045075">
    <property type="entry name" value="Syf1-like"/>
</dbReference>
<dbReference type="InterPro" id="IPR011990">
    <property type="entry name" value="TPR-like_helical_dom_sf"/>
</dbReference>
<dbReference type="InterPro" id="IPR019734">
    <property type="entry name" value="TPR_rpt"/>
</dbReference>
<dbReference type="PANTHER" id="PTHR11246">
    <property type="entry name" value="PRE-MRNA SPLICING FACTOR"/>
    <property type="match status" value="1"/>
</dbReference>
<dbReference type="PANTHER" id="PTHR11246:SF5">
    <property type="entry name" value="PRE-MRNA-SPLICING FACTOR SYF1"/>
    <property type="match status" value="1"/>
</dbReference>
<dbReference type="Pfam" id="PF23231">
    <property type="entry name" value="HAT_Syf1_CNRKL1_C"/>
    <property type="match status" value="1"/>
</dbReference>
<dbReference type="Pfam" id="PF23233">
    <property type="entry name" value="HAT_Syf1_CNRKL1_N"/>
    <property type="match status" value="1"/>
</dbReference>
<dbReference type="Pfam" id="PF23220">
    <property type="entry name" value="HAT_Syf1_M"/>
    <property type="match status" value="1"/>
</dbReference>
<dbReference type="SMART" id="SM00386">
    <property type="entry name" value="HAT"/>
    <property type="match status" value="10"/>
</dbReference>
<dbReference type="SMART" id="SM00028">
    <property type="entry name" value="TPR"/>
    <property type="match status" value="3"/>
</dbReference>
<dbReference type="SUPFAM" id="SSF48452">
    <property type="entry name" value="TPR-like"/>
    <property type="match status" value="4"/>
</dbReference>
<sequence length="855" mass="99998">MVVMARVPRPERPDLVFEEEDLPYEEEIMRNQFSVKCWLRYIEFKQGAPKPRLNQLYERALKLLPCSYKLWYRYLKARRAQVKHRCVTDPAYEDVNNCHERAFVFMHKMPRLWLDYCQFLMDQGRVTHTRRTFDRALRALPITQHSRIWPLYLRFLRSHPLPETAVRGYRRFLKLSPESAEEYIEYLKSSDRLDEAAQRLATVVNDERFVSKAGKSNYQLWHELCDLISQNPDKVQSLNVDAIIRGGLTRFTDQLGKLWCSLADYYIRSGHFEKARDVYEEAIRTVMTVRDFTQVFDSYAQFEESMIAAKMETASELGREEEDDVDLELRLARFEQLISRRPLLLNSVLLRQNPHHVHEWHKRVALHQGRPREIINTYTEAVQTVDPFKATGKPHTLWVAFAKFYEDNGQLDDARVILEKATKVNFKQVDDLASVWCQCGELELRHENYDEALKLLRKATALPARRAEYFDGSEPVQNRVYKSLKVWSMLADLEESLGTFQSTKAVYDRILDLRIATPQIVINYAMFLEEHKYFEESFKAYERGISLFKWPNVSDIWSTYLTKFISRYGGRKLERARDLFEQALDGCPPKYAKTLYLLYAQLEEEWGLARHAMAVYDRATRAVEPAQQYDMFNIYIKRAAEIYGVTHTRGIYQKAIEVLSDEHAREMCLRFADMECKLGEIDRARAIYSFCSQICDPRTTGAFWQTWKDFEVRHGNEDTIREMLRIRRSVQATYNTQVNFMASQMLKVSGSATGTVSDLAPGQSGMDDMKLLEQRAEQLAAEAERDQPPRAQSKIFFVRSDASREELAELAQQANPEEIQLGEDEDEDEMDLEPNEVRLEQQSVPAAVFGSLKED</sequence>
<reference key="1">
    <citation type="journal article" date="2003" name="J. Biochem.">
        <title>A novel rat orthologue and homologue for the Drosophila crooked neck gene in neural stem cells and their immediate descendants.</title>
        <authorList>
            <person name="Amada N."/>
            <person name="Tezuka T."/>
            <person name="Mayeda A."/>
            <person name="Araki K."/>
            <person name="Takei N."/>
            <person name="Todokoro K."/>
            <person name="Nawa H."/>
        </authorList>
    </citation>
    <scope>NUCLEOTIDE SEQUENCE [MRNA]</scope>
    <scope>SUBCELLULAR LOCATION</scope>
    <source>
        <strain>Sprague-Dawley</strain>
        <tissue>Embryonic brain</tissue>
    </source>
</reference>
<reference key="2">
    <citation type="journal article" date="2004" name="Genome Res.">
        <title>The status, quality, and expansion of the NIH full-length cDNA project: the Mammalian Gene Collection (MGC).</title>
        <authorList>
            <consortium name="The MGC Project Team"/>
        </authorList>
    </citation>
    <scope>NUCLEOTIDE SEQUENCE [LARGE SCALE MRNA]</scope>
    <source>
        <tissue>Kidney</tissue>
    </source>
</reference>
<protein>
    <recommendedName>
        <fullName>Pre-mRNA-splicing factor SYF1</fullName>
    </recommendedName>
    <alternativeName>
        <fullName evidence="4">Adapter protein ATH-55</fullName>
    </alternativeName>
    <alternativeName>
        <fullName>XPA-binding protein 2</fullName>
    </alternativeName>
</protein>
<proteinExistence type="evidence at transcript level"/>
<feature type="chain" id="PRO_0000106416" description="Pre-mRNA-splicing factor SYF1">
    <location>
        <begin position="1"/>
        <end position="855"/>
    </location>
</feature>
<feature type="repeat" description="HAT 1" evidence="5">
    <location>
        <begin position="15"/>
        <end position="47"/>
    </location>
</feature>
<feature type="repeat" description="HAT 2" evidence="5">
    <location>
        <begin position="48"/>
        <end position="80"/>
    </location>
</feature>
<feature type="repeat" description="HAT 3" evidence="5">
    <location>
        <begin position="90"/>
        <end position="122"/>
    </location>
</feature>
<feature type="repeat" description="HAT 4" evidence="5">
    <location>
        <begin position="124"/>
        <end position="158"/>
    </location>
</feature>
<feature type="repeat" description="HAT 5" evidence="5">
    <location>
        <begin position="160"/>
        <end position="192"/>
    </location>
</feature>
<feature type="repeat" description="HAT 6">
    <location>
        <begin position="198"/>
        <end position="230"/>
    </location>
</feature>
<feature type="repeat" description="HAT 7">
    <location>
        <begin position="235"/>
        <end position="268"/>
    </location>
</feature>
<feature type="repeat" description="HAT 8">
    <location>
        <begin position="270"/>
        <end position="305"/>
    </location>
</feature>
<feature type="repeat" description="HAT 9">
    <location>
        <begin position="369"/>
        <end position="407"/>
    </location>
</feature>
<feature type="repeat" description="HAT 10">
    <location>
        <begin position="498"/>
        <end position="530"/>
    </location>
</feature>
<feature type="repeat" description="HAT 11">
    <location>
        <begin position="532"/>
        <end position="566"/>
    </location>
</feature>
<feature type="repeat" description="HAT 12">
    <location>
        <begin position="571"/>
        <end position="605"/>
    </location>
</feature>
<feature type="repeat" description="HAT 13">
    <location>
        <begin position="643"/>
        <end position="677"/>
    </location>
</feature>
<feature type="repeat" description="HAT 14">
    <location>
        <begin position="679"/>
        <end position="713"/>
    </location>
</feature>
<feature type="region of interest" description="Disordered" evidence="2">
    <location>
        <begin position="808"/>
        <end position="855"/>
    </location>
</feature>
<feature type="compositionally biased region" description="Acidic residues" evidence="2">
    <location>
        <begin position="820"/>
        <end position="834"/>
    </location>
</feature>
<feature type="modified residue" description="N6-acetyllysine" evidence="1">
    <location>
        <position position="420"/>
    </location>
</feature>
<feature type="modified residue" description="Phosphoserine" evidence="1">
    <location>
        <position position="851"/>
    </location>
</feature>